<reference key="1">
    <citation type="journal article" date="2007" name="Plant Cell">
        <title>Rice NON-YELLOW COLORING1 is involved in light-harvesting complex II and grana degradation during leaf senescence.</title>
        <authorList>
            <person name="Kusaba M."/>
            <person name="Ito H."/>
            <person name="Morita R."/>
            <person name="Iida S."/>
            <person name="Sato Y."/>
            <person name="Fujimoto M."/>
            <person name="Kawasaki S."/>
            <person name="Tanaka R."/>
            <person name="Hirochika H."/>
            <person name="Nishimura M."/>
            <person name="Tanaka A."/>
        </authorList>
    </citation>
    <scope>NUCLEOTIDE SEQUENCE [MRNA]</scope>
</reference>
<reference key="2">
    <citation type="journal article" date="1997" name="DNA Res.">
        <title>Structural analysis of Arabidopsis thaliana chromosome 5. I. Sequence features of the 1.6 Mb regions covered by twenty physically assigned P1 clones.</title>
        <authorList>
            <person name="Sato S."/>
            <person name="Kotani H."/>
            <person name="Nakamura Y."/>
            <person name="Kaneko T."/>
            <person name="Asamizu E."/>
            <person name="Fukami M."/>
            <person name="Miyajima N."/>
            <person name="Tabata S."/>
        </authorList>
    </citation>
    <scope>NUCLEOTIDE SEQUENCE [LARGE SCALE GENOMIC DNA]</scope>
    <source>
        <strain>cv. Columbia</strain>
    </source>
</reference>
<reference key="3">
    <citation type="journal article" date="2017" name="Plant J.">
        <title>Araport11: a complete reannotation of the Arabidopsis thaliana reference genome.</title>
        <authorList>
            <person name="Cheng C.Y."/>
            <person name="Krishnakumar V."/>
            <person name="Chan A.P."/>
            <person name="Thibaud-Nissen F."/>
            <person name="Schobel S."/>
            <person name="Town C.D."/>
        </authorList>
    </citation>
    <scope>GENOME REANNOTATION</scope>
    <source>
        <strain>cv. Columbia</strain>
    </source>
</reference>
<reference key="4">
    <citation type="submission" date="2002-03" db="EMBL/GenBank/DDBJ databases">
        <title>Full-length cDNA from Arabidopsis thaliana.</title>
        <authorList>
            <person name="Brover V.V."/>
            <person name="Troukhan M.E."/>
            <person name="Alexandrov N.A."/>
            <person name="Lu Y.-P."/>
            <person name="Flavell R.B."/>
            <person name="Feldmann K.A."/>
        </authorList>
    </citation>
    <scope>NUCLEOTIDE SEQUENCE [LARGE SCALE MRNA]</scope>
    <source>
        <strain>cv. Columbia</strain>
    </source>
</reference>
<reference key="5">
    <citation type="submission" date="2006-04" db="EMBL/GenBank/DDBJ databases">
        <title>Arabidopsis ORF clones.</title>
        <authorList>
            <person name="Shinn P."/>
            <person name="Chen H."/>
            <person name="Kim C.J."/>
            <person name="Quinitio C."/>
            <person name="Ecker J.R."/>
        </authorList>
    </citation>
    <scope>NUCLEOTIDE SEQUENCE [LARGE SCALE MRNA]</scope>
</reference>
<reference key="6">
    <citation type="journal article" date="2009" name="J. Biol. Chem.">
        <title>Participation of chlorophyll b reductase in the initial step of the degradation of light-harvesting chlorophyll a/b-protein complexes in Arabidopsis.</title>
        <authorList>
            <person name="Horie Y."/>
            <person name="Ito H."/>
            <person name="Kusaba M."/>
            <person name="Tanaka R."/>
            <person name="Tanaka A."/>
        </authorList>
    </citation>
    <scope>FUNCTION</scope>
    <scope>DISRUPTION PHENOTYPE</scope>
    <source>
        <strain>cv. Columbia</strain>
    </source>
</reference>
<reference key="7">
    <citation type="journal article" date="2012" name="Plant Cell">
        <title>STAY-GREEN and chlorophyll catabolic enzymes interact at light-harvesting complex II for chlorophyll detoxification during leaf senescence in Arabidopsis.</title>
        <authorList>
            <person name="Sakuraba Y."/>
            <person name="Schelbert S."/>
            <person name="Park S.Y."/>
            <person name="Han S.H."/>
            <person name="Lee B.D."/>
            <person name="Andres C.B."/>
            <person name="Kessler F."/>
            <person name="Hortensteiner S."/>
            <person name="Paek N.C."/>
        </authorList>
    </citation>
    <scope>SUBCELLULAR LOCATION</scope>
    <scope>INTERACTION WITH NYC1; RCCR AND LHCII COMPLEX</scope>
</reference>
<reference key="8">
    <citation type="journal article" date="2013" name="Biochem. Biophys. Res. Commun.">
        <title>7-Hydroxymethyl chlorophyll a reductase functions in metabolic channeling of chlorophyll breakdown intermediates during leaf senescence.</title>
        <authorList>
            <person name="Sakuraba Y."/>
            <person name="Kim Y.S."/>
            <person name="Yoo S.C."/>
            <person name="Hortensteiner S."/>
            <person name="Paek N.C."/>
        </authorList>
    </citation>
    <scope>INTERACTION WITH HCAR</scope>
    <scope>DEVELOPMENTAL STAGE</scope>
</reference>
<proteinExistence type="evidence at protein level"/>
<accession>Q8LEU3</accession>
<accession>Q9FF83</accession>
<organism>
    <name type="scientific">Arabidopsis thaliana</name>
    <name type="common">Mouse-ear cress</name>
    <dbReference type="NCBI Taxonomy" id="3702"/>
    <lineage>
        <taxon>Eukaryota</taxon>
        <taxon>Viridiplantae</taxon>
        <taxon>Streptophyta</taxon>
        <taxon>Embryophyta</taxon>
        <taxon>Tracheophyta</taxon>
        <taxon>Spermatophyta</taxon>
        <taxon>Magnoliopsida</taxon>
        <taxon>eudicotyledons</taxon>
        <taxon>Gunneridae</taxon>
        <taxon>Pentapetalae</taxon>
        <taxon>rosids</taxon>
        <taxon>malvids</taxon>
        <taxon>Brassicales</taxon>
        <taxon>Brassicaceae</taxon>
        <taxon>Camelineae</taxon>
        <taxon>Arabidopsis</taxon>
    </lineage>
</organism>
<feature type="transit peptide" description="Chloroplast" evidence="2">
    <location>
        <begin position="1"/>
        <end position="61"/>
    </location>
</feature>
<feature type="chain" id="PRO_0000391416" description="Chlorophyll(ide) b reductase NOL, chloroplastic">
    <location>
        <begin position="62"/>
        <end position="348"/>
    </location>
</feature>
<feature type="active site" description="Proton acceptor" evidence="3">
    <location>
        <position position="233"/>
    </location>
</feature>
<feature type="binding site" evidence="1">
    <location>
        <begin position="84"/>
        <end position="108"/>
    </location>
    <ligand>
        <name>NAD(+)</name>
        <dbReference type="ChEBI" id="CHEBI:57540"/>
    </ligand>
</feature>
<keyword id="KW-0881">Chlorophyll catabolism</keyword>
<keyword id="KW-0150">Chloroplast</keyword>
<keyword id="KW-0472">Membrane</keyword>
<keyword id="KW-0520">NAD</keyword>
<keyword id="KW-0560">Oxidoreductase</keyword>
<keyword id="KW-0934">Plastid</keyword>
<keyword id="KW-1185">Reference proteome</keyword>
<keyword id="KW-0793">Thylakoid</keyword>
<keyword id="KW-0809">Transit peptide</keyword>
<protein>
    <recommendedName>
        <fullName>Chlorophyll(ide) b reductase NOL, chloroplastic</fullName>
        <ecNumber>1.1.1.294</ecNumber>
    </recommendedName>
    <alternativeName>
        <fullName>Protein NON-YELLOW COLORING 1-LIKE</fullName>
        <shortName>AtNOL</shortName>
        <shortName>Protein NYC1-LIKE</shortName>
    </alternativeName>
    <alternativeName>
        <fullName>Short-chain dehydrogenase/reductase NOL</fullName>
    </alternativeName>
</protein>
<gene>
    <name type="primary">NOL</name>
    <name type="ordered locus">At5g04900</name>
    <name type="ORF">MUG13.25</name>
</gene>
<comment type="function">
    <text evidence="4">Required for chlorophyll b degradation. Chlorophyll b, chlorophyllide b, pheophorbide b and pheophytin b can be used as substrates. Belongs to the chlorophyll catabolic enzymes (CCEs).</text>
</comment>
<comment type="catalytic activity">
    <reaction>
        <text>7(1)-hydroxychlorophyllide a + NAD(+) = chlorophyllide b + NADH + H(+)</text>
        <dbReference type="Rhea" id="RHEA:24768"/>
        <dbReference type="ChEBI" id="CHEBI:15378"/>
        <dbReference type="ChEBI" id="CHEBI:57540"/>
        <dbReference type="ChEBI" id="CHEBI:57945"/>
        <dbReference type="ChEBI" id="CHEBI:83356"/>
        <dbReference type="ChEBI" id="CHEBI:83357"/>
        <dbReference type="EC" id="1.1.1.294"/>
    </reaction>
</comment>
<comment type="catalytic activity">
    <reaction>
        <text>7(1)-hydroxychlorophyllide a + NADP(+) = chlorophyllide b + NADPH + H(+)</text>
        <dbReference type="Rhea" id="RHEA:24772"/>
        <dbReference type="ChEBI" id="CHEBI:15378"/>
        <dbReference type="ChEBI" id="CHEBI:57783"/>
        <dbReference type="ChEBI" id="CHEBI:58349"/>
        <dbReference type="ChEBI" id="CHEBI:83356"/>
        <dbReference type="ChEBI" id="CHEBI:83357"/>
        <dbReference type="EC" id="1.1.1.294"/>
    </reaction>
</comment>
<comment type="subunit">
    <text evidence="5 6">Interacts with NCY1 to form a complex that acts as a chlorophyll b reductase. Interacts with HCAR, RCCR and the LHCII complex. Part of a SGR1-CCE-LHCII complex, which acts in chlorophyll breakdown.</text>
</comment>
<comment type="subcellular location">
    <subcellularLocation>
        <location evidence="5">Plastid</location>
        <location evidence="5">Chloroplast thylakoid membrane</location>
        <topology evidence="5">Peripheral membrane protein</topology>
    </subcellularLocation>
</comment>
<comment type="developmental stage">
    <text evidence="6">Constantly expressed throughout development.</text>
</comment>
<comment type="disruption phenotype">
    <text evidence="4">Slower degradation of chlorophyll b during dark incubation.</text>
</comment>
<comment type="miscellaneous">
    <text>Chlorophyll b reductase activity detected in vitro with a recombinant protein produced in a heterologous system. Able to act on the substrate within the protein-chlorophyll LHCII complex.</text>
</comment>
<comment type="similarity">
    <text evidence="7">Belongs to the short-chain dehydrogenases/reductases (SDR) family.</text>
</comment>
<comment type="sequence caution" evidence="7">
    <conflict type="erroneous gene model prediction">
        <sequence resource="EMBL-CDS" id="BAB11512"/>
    </conflict>
</comment>
<sequence length="348" mass="38149">MATWSGFNVSSSPLLRLRSSSVSNVTKLPFLSPICRRRLLAERFGLATVVVTRQNLTVTPSSAAVEARISGKREPMTPPYNILITGSTKGIGYALAREFLKAGDNVVICSRSAERVETAVQSLKEEFGEHVWGTKCDVTEGKDVRELVAYSQKNLKYIDIWINNAGSNAYSFKPLAEASDEDLIEVVKTNTLGLMLCCREAMNMMLTQSRGGHIFNIDGAGSDGRPTPRFAAYGATKRSVVHLTKSLQAELQMQDVKNVVVHNLSPGMVTTDLLMSGATTKQAKFFINVLAEPAEVVAEYLVPNIRAIPASGSMKPTYIRFLTGIKAYTKIFSRVALGARKNRYVTEE</sequence>
<dbReference type="EC" id="1.1.1.294"/>
<dbReference type="EMBL" id="AB255027">
    <property type="protein sequence ID" value="BAF49742.1"/>
    <property type="molecule type" value="mRNA"/>
</dbReference>
<dbReference type="EMBL" id="AB005245">
    <property type="protein sequence ID" value="BAB11512.1"/>
    <property type="status" value="ALT_SEQ"/>
    <property type="molecule type" value="Genomic_DNA"/>
</dbReference>
<dbReference type="EMBL" id="CP002688">
    <property type="protein sequence ID" value="AED90802.1"/>
    <property type="molecule type" value="Genomic_DNA"/>
</dbReference>
<dbReference type="EMBL" id="AY085229">
    <property type="protein sequence ID" value="AAM62462.1"/>
    <property type="molecule type" value="mRNA"/>
</dbReference>
<dbReference type="EMBL" id="BT025238">
    <property type="protein sequence ID" value="ABF18991.1"/>
    <property type="molecule type" value="mRNA"/>
</dbReference>
<dbReference type="RefSeq" id="NP_568145.1">
    <property type="nucleotide sequence ID" value="NM_120572.3"/>
</dbReference>
<dbReference type="SMR" id="Q8LEU3"/>
<dbReference type="BioGRID" id="15651">
    <property type="interactions" value="7"/>
</dbReference>
<dbReference type="FunCoup" id="Q8LEU3">
    <property type="interactions" value="363"/>
</dbReference>
<dbReference type="IntAct" id="Q8LEU3">
    <property type="interactions" value="2"/>
</dbReference>
<dbReference type="MINT" id="Q8LEU3"/>
<dbReference type="STRING" id="3702.Q8LEU3"/>
<dbReference type="GlyGen" id="Q8LEU3">
    <property type="glycosylation" value="1 site"/>
</dbReference>
<dbReference type="PaxDb" id="3702-AT5G04900.1"/>
<dbReference type="ProteomicsDB" id="250594"/>
<dbReference type="EnsemblPlants" id="AT5G04900.1">
    <property type="protein sequence ID" value="AT5G04900.1"/>
    <property type="gene ID" value="AT5G04900"/>
</dbReference>
<dbReference type="GeneID" id="830372"/>
<dbReference type="Gramene" id="AT5G04900.1">
    <property type="protein sequence ID" value="AT5G04900.1"/>
    <property type="gene ID" value="AT5G04900"/>
</dbReference>
<dbReference type="KEGG" id="ath:AT5G04900"/>
<dbReference type="Araport" id="AT5G04900"/>
<dbReference type="TAIR" id="AT5G04900">
    <property type="gene designation" value="NOL"/>
</dbReference>
<dbReference type="eggNOG" id="KOG0725">
    <property type="taxonomic scope" value="Eukaryota"/>
</dbReference>
<dbReference type="HOGENOM" id="CLU_010194_2_4_1"/>
<dbReference type="InParanoid" id="Q8LEU3"/>
<dbReference type="OMA" id="WNMEGLG"/>
<dbReference type="PhylomeDB" id="Q8LEU3"/>
<dbReference type="BioCyc" id="ARA:AT5G04900-MONOMER"/>
<dbReference type="BioCyc" id="MetaCyc:AT5G04900-MONOMER"/>
<dbReference type="BRENDA" id="1.1.1.294">
    <property type="organism ID" value="399"/>
</dbReference>
<dbReference type="PRO" id="PR:Q8LEU3"/>
<dbReference type="Proteomes" id="UP000006548">
    <property type="component" value="Chromosome 5"/>
</dbReference>
<dbReference type="ExpressionAtlas" id="Q8LEU3">
    <property type="expression patterns" value="baseline and differential"/>
</dbReference>
<dbReference type="GO" id="GO:0009507">
    <property type="term" value="C:chloroplast"/>
    <property type="evidence" value="ECO:0007005"/>
    <property type="project" value="TAIR"/>
</dbReference>
<dbReference type="GO" id="GO:0009535">
    <property type="term" value="C:chloroplast thylakoid membrane"/>
    <property type="evidence" value="ECO:0007669"/>
    <property type="project" value="UniProtKB-SubCell"/>
</dbReference>
<dbReference type="GO" id="GO:0005886">
    <property type="term" value="C:plasma membrane"/>
    <property type="evidence" value="ECO:0007005"/>
    <property type="project" value="TAIR"/>
</dbReference>
<dbReference type="GO" id="GO:0034256">
    <property type="term" value="F:chlorophyll(ide) b reductase activity"/>
    <property type="evidence" value="ECO:0000314"/>
    <property type="project" value="TAIR"/>
</dbReference>
<dbReference type="GO" id="GO:0015996">
    <property type="term" value="P:chlorophyll catabolic process"/>
    <property type="evidence" value="ECO:0000314"/>
    <property type="project" value="TAIR"/>
</dbReference>
<dbReference type="GO" id="GO:0010304">
    <property type="term" value="P:PSII associated light-harvesting complex II catabolic process"/>
    <property type="evidence" value="ECO:0000304"/>
    <property type="project" value="TAIR"/>
</dbReference>
<dbReference type="CDD" id="cd05233">
    <property type="entry name" value="SDR_c"/>
    <property type="match status" value="1"/>
</dbReference>
<dbReference type="FunFam" id="3.40.50.720:FF:000223">
    <property type="entry name" value="Chlorophyll(Ide) b reductase NOL, chloroplastic"/>
    <property type="match status" value="1"/>
</dbReference>
<dbReference type="Gene3D" id="3.40.50.720">
    <property type="entry name" value="NAD(P)-binding Rossmann-like Domain"/>
    <property type="match status" value="1"/>
</dbReference>
<dbReference type="InterPro" id="IPR052625">
    <property type="entry name" value="Chl_b_Red"/>
</dbReference>
<dbReference type="InterPro" id="IPR036291">
    <property type="entry name" value="NAD(P)-bd_dom_sf"/>
</dbReference>
<dbReference type="InterPro" id="IPR020904">
    <property type="entry name" value="Sc_DH/Rdtase_CS"/>
</dbReference>
<dbReference type="InterPro" id="IPR002347">
    <property type="entry name" value="SDR_fam"/>
</dbReference>
<dbReference type="PANTHER" id="PTHR24314:SF15">
    <property type="entry name" value="CHLOROPHYLL(IDE) B REDUCTASE NOL, CHLOROPLASTIC"/>
    <property type="match status" value="1"/>
</dbReference>
<dbReference type="PANTHER" id="PTHR24314">
    <property type="entry name" value="NON-SPECIFIC LIPID TRANSFER PROTEIN-RELATED"/>
    <property type="match status" value="1"/>
</dbReference>
<dbReference type="Pfam" id="PF00106">
    <property type="entry name" value="adh_short"/>
    <property type="match status" value="1"/>
</dbReference>
<dbReference type="PRINTS" id="PR00081">
    <property type="entry name" value="GDHRDH"/>
</dbReference>
<dbReference type="PRINTS" id="PR00080">
    <property type="entry name" value="SDRFAMILY"/>
</dbReference>
<dbReference type="SUPFAM" id="SSF51735">
    <property type="entry name" value="NAD(P)-binding Rossmann-fold domains"/>
    <property type="match status" value="1"/>
</dbReference>
<dbReference type="PROSITE" id="PS00061">
    <property type="entry name" value="ADH_SHORT"/>
    <property type="match status" value="1"/>
</dbReference>
<name>NOL_ARATH</name>
<evidence type="ECO:0000250" key="1"/>
<evidence type="ECO:0000255" key="2"/>
<evidence type="ECO:0000255" key="3">
    <source>
        <dbReference type="PROSITE-ProRule" id="PRU10001"/>
    </source>
</evidence>
<evidence type="ECO:0000269" key="4">
    <source>
    </source>
</evidence>
<evidence type="ECO:0000269" key="5">
    <source>
    </source>
</evidence>
<evidence type="ECO:0000269" key="6">
    <source>
    </source>
</evidence>
<evidence type="ECO:0000305" key="7"/>